<sequence length="211" mass="22589">MMFSFIVHVFISLFAVSNPIGNVPIFLTLTEGYTAAERKAIARKAAILSFFILAAFLVFGHLIFKLFDINIHALRVAGGIFIFGIAYNLLNAKESHVQSLHHDEHKESKEKADISVTPLSIPIIAGPGTIATVMSLSAGHSGIGHYAAVMIGIAAVIALTFLFFHYSAFISSKLGKTEMNVITRLMGLILAVVAVGMIGAGLKGMFPVLTS</sequence>
<protein>
    <recommendedName>
        <fullName>UPF0056 membrane protein YvbG</fullName>
    </recommendedName>
</protein>
<proteinExistence type="inferred from homology"/>
<reference key="1">
    <citation type="journal article" date="1997" name="Nature">
        <title>The complete genome sequence of the Gram-positive bacterium Bacillus subtilis.</title>
        <authorList>
            <person name="Kunst F."/>
            <person name="Ogasawara N."/>
            <person name="Moszer I."/>
            <person name="Albertini A.M."/>
            <person name="Alloni G."/>
            <person name="Azevedo V."/>
            <person name="Bertero M.G."/>
            <person name="Bessieres P."/>
            <person name="Bolotin A."/>
            <person name="Borchert S."/>
            <person name="Borriss R."/>
            <person name="Boursier L."/>
            <person name="Brans A."/>
            <person name="Braun M."/>
            <person name="Brignell S.C."/>
            <person name="Bron S."/>
            <person name="Brouillet S."/>
            <person name="Bruschi C.V."/>
            <person name="Caldwell B."/>
            <person name="Capuano V."/>
            <person name="Carter N.M."/>
            <person name="Choi S.-K."/>
            <person name="Codani J.-J."/>
            <person name="Connerton I.F."/>
            <person name="Cummings N.J."/>
            <person name="Daniel R.A."/>
            <person name="Denizot F."/>
            <person name="Devine K.M."/>
            <person name="Duesterhoeft A."/>
            <person name="Ehrlich S.D."/>
            <person name="Emmerson P.T."/>
            <person name="Entian K.-D."/>
            <person name="Errington J."/>
            <person name="Fabret C."/>
            <person name="Ferrari E."/>
            <person name="Foulger D."/>
            <person name="Fritz C."/>
            <person name="Fujita M."/>
            <person name="Fujita Y."/>
            <person name="Fuma S."/>
            <person name="Galizzi A."/>
            <person name="Galleron N."/>
            <person name="Ghim S.-Y."/>
            <person name="Glaser P."/>
            <person name="Goffeau A."/>
            <person name="Golightly E.J."/>
            <person name="Grandi G."/>
            <person name="Guiseppi G."/>
            <person name="Guy B.J."/>
            <person name="Haga K."/>
            <person name="Haiech J."/>
            <person name="Harwood C.R."/>
            <person name="Henaut A."/>
            <person name="Hilbert H."/>
            <person name="Holsappel S."/>
            <person name="Hosono S."/>
            <person name="Hullo M.-F."/>
            <person name="Itaya M."/>
            <person name="Jones L.-M."/>
            <person name="Joris B."/>
            <person name="Karamata D."/>
            <person name="Kasahara Y."/>
            <person name="Klaerr-Blanchard M."/>
            <person name="Klein C."/>
            <person name="Kobayashi Y."/>
            <person name="Koetter P."/>
            <person name="Koningstein G."/>
            <person name="Krogh S."/>
            <person name="Kumano M."/>
            <person name="Kurita K."/>
            <person name="Lapidus A."/>
            <person name="Lardinois S."/>
            <person name="Lauber J."/>
            <person name="Lazarevic V."/>
            <person name="Lee S.-M."/>
            <person name="Levine A."/>
            <person name="Liu H."/>
            <person name="Masuda S."/>
            <person name="Mauel C."/>
            <person name="Medigue C."/>
            <person name="Medina N."/>
            <person name="Mellado R.P."/>
            <person name="Mizuno M."/>
            <person name="Moestl D."/>
            <person name="Nakai S."/>
            <person name="Noback M."/>
            <person name="Noone D."/>
            <person name="O'Reilly M."/>
            <person name="Ogawa K."/>
            <person name="Ogiwara A."/>
            <person name="Oudega B."/>
            <person name="Park S.-H."/>
            <person name="Parro V."/>
            <person name="Pohl T.M."/>
            <person name="Portetelle D."/>
            <person name="Porwollik S."/>
            <person name="Prescott A.M."/>
            <person name="Presecan E."/>
            <person name="Pujic P."/>
            <person name="Purnelle B."/>
            <person name="Rapoport G."/>
            <person name="Rey M."/>
            <person name="Reynolds S."/>
            <person name="Rieger M."/>
            <person name="Rivolta C."/>
            <person name="Rocha E."/>
            <person name="Roche B."/>
            <person name="Rose M."/>
            <person name="Sadaie Y."/>
            <person name="Sato T."/>
            <person name="Scanlan E."/>
            <person name="Schleich S."/>
            <person name="Schroeter R."/>
            <person name="Scoffone F."/>
            <person name="Sekiguchi J."/>
            <person name="Sekowska A."/>
            <person name="Seror S.J."/>
            <person name="Serror P."/>
            <person name="Shin B.-S."/>
            <person name="Soldo B."/>
            <person name="Sorokin A."/>
            <person name="Tacconi E."/>
            <person name="Takagi T."/>
            <person name="Takahashi H."/>
            <person name="Takemaru K."/>
            <person name="Takeuchi M."/>
            <person name="Tamakoshi A."/>
            <person name="Tanaka T."/>
            <person name="Terpstra P."/>
            <person name="Tognoni A."/>
            <person name="Tosato V."/>
            <person name="Uchiyama S."/>
            <person name="Vandenbol M."/>
            <person name="Vannier F."/>
            <person name="Vassarotti A."/>
            <person name="Viari A."/>
            <person name="Wambutt R."/>
            <person name="Wedler E."/>
            <person name="Wedler H."/>
            <person name="Weitzenegger T."/>
            <person name="Winters P."/>
            <person name="Wipat A."/>
            <person name="Yamamoto H."/>
            <person name="Yamane K."/>
            <person name="Yasumoto K."/>
            <person name="Yata K."/>
            <person name="Yoshida K."/>
            <person name="Yoshikawa H.-F."/>
            <person name="Zumstein E."/>
            <person name="Yoshikawa H."/>
            <person name="Danchin A."/>
        </authorList>
    </citation>
    <scope>NUCLEOTIDE SEQUENCE [LARGE SCALE GENOMIC DNA]</scope>
    <source>
        <strain>168</strain>
    </source>
</reference>
<feature type="chain" id="PRO_0000156905" description="UPF0056 membrane protein YvbG">
    <location>
        <begin position="1"/>
        <end position="211"/>
    </location>
</feature>
<feature type="transmembrane region" description="Helical" evidence="1">
    <location>
        <begin position="1"/>
        <end position="21"/>
    </location>
</feature>
<feature type="transmembrane region" description="Helical" evidence="1">
    <location>
        <begin position="47"/>
        <end position="67"/>
    </location>
</feature>
<feature type="transmembrane region" description="Helical" evidence="1">
    <location>
        <begin position="69"/>
        <end position="89"/>
    </location>
</feature>
<feature type="transmembrane region" description="Helical" evidence="1">
    <location>
        <begin position="114"/>
        <end position="134"/>
    </location>
</feature>
<feature type="transmembrane region" description="Helical" evidence="1">
    <location>
        <begin position="150"/>
        <end position="170"/>
    </location>
</feature>
<feature type="transmembrane region" description="Helical" evidence="1">
    <location>
        <begin position="188"/>
        <end position="208"/>
    </location>
</feature>
<keyword id="KW-1003">Cell membrane</keyword>
<keyword id="KW-0472">Membrane</keyword>
<keyword id="KW-1185">Reference proteome</keyword>
<keyword id="KW-0812">Transmembrane</keyword>
<keyword id="KW-1133">Transmembrane helix</keyword>
<dbReference type="EMBL" id="AL009126">
    <property type="protein sequence ID" value="CAB15390.1"/>
    <property type="molecule type" value="Genomic_DNA"/>
</dbReference>
<dbReference type="PIR" id="F70029">
    <property type="entry name" value="F70029"/>
</dbReference>
<dbReference type="RefSeq" id="NP_391265.1">
    <property type="nucleotide sequence ID" value="NC_000964.3"/>
</dbReference>
<dbReference type="RefSeq" id="WP_010886614.1">
    <property type="nucleotide sequence ID" value="NZ_OZ025638.1"/>
</dbReference>
<dbReference type="FunCoup" id="O32244">
    <property type="interactions" value="139"/>
</dbReference>
<dbReference type="STRING" id="224308.BSU33850"/>
<dbReference type="TCDB" id="2.A.95.1.3">
    <property type="family name" value="the 6 tms neutral amino acid transporter (naat) family"/>
</dbReference>
<dbReference type="PaxDb" id="224308-BSU33850"/>
<dbReference type="EnsemblBacteria" id="CAB15390">
    <property type="protein sequence ID" value="CAB15390"/>
    <property type="gene ID" value="BSU_33850"/>
</dbReference>
<dbReference type="GeneID" id="938636"/>
<dbReference type="KEGG" id="bsu:BSU33850"/>
<dbReference type="PATRIC" id="fig|224308.43.peg.3548"/>
<dbReference type="eggNOG" id="COG2095">
    <property type="taxonomic scope" value="Bacteria"/>
</dbReference>
<dbReference type="InParanoid" id="O32244"/>
<dbReference type="OrthoDB" id="21094at2"/>
<dbReference type="PhylomeDB" id="O32244"/>
<dbReference type="BioCyc" id="BSUB:BSU33850-MONOMER"/>
<dbReference type="Proteomes" id="UP000001570">
    <property type="component" value="Chromosome"/>
</dbReference>
<dbReference type="GO" id="GO:0005886">
    <property type="term" value="C:plasma membrane"/>
    <property type="evidence" value="ECO:0007669"/>
    <property type="project" value="UniProtKB-SubCell"/>
</dbReference>
<dbReference type="InterPro" id="IPR002771">
    <property type="entry name" value="Multi_antbiot-R_MarC"/>
</dbReference>
<dbReference type="NCBIfam" id="TIGR00427">
    <property type="entry name" value="NAAT family transporter"/>
    <property type="match status" value="1"/>
</dbReference>
<dbReference type="PANTHER" id="PTHR33508">
    <property type="entry name" value="UPF0056 MEMBRANE PROTEIN YHCE"/>
    <property type="match status" value="1"/>
</dbReference>
<dbReference type="PANTHER" id="PTHR33508:SF1">
    <property type="entry name" value="UPF0056 MEMBRANE PROTEIN YHCE"/>
    <property type="match status" value="1"/>
</dbReference>
<dbReference type="Pfam" id="PF01914">
    <property type="entry name" value="MarC"/>
    <property type="match status" value="1"/>
</dbReference>
<organism>
    <name type="scientific">Bacillus subtilis (strain 168)</name>
    <dbReference type="NCBI Taxonomy" id="224308"/>
    <lineage>
        <taxon>Bacteria</taxon>
        <taxon>Bacillati</taxon>
        <taxon>Bacillota</taxon>
        <taxon>Bacilli</taxon>
        <taxon>Bacillales</taxon>
        <taxon>Bacillaceae</taxon>
        <taxon>Bacillus</taxon>
    </lineage>
</organism>
<accession>O32244</accession>
<name>YVBG_BACSU</name>
<comment type="subcellular location">
    <subcellularLocation>
        <location evidence="2">Cell membrane</location>
        <topology evidence="2">Multi-pass membrane protein</topology>
    </subcellularLocation>
</comment>
<comment type="similarity">
    <text evidence="2">Belongs to the UPF0056 (MarC) family.</text>
</comment>
<evidence type="ECO:0000255" key="1"/>
<evidence type="ECO:0000305" key="2"/>
<gene>
    <name type="primary">yvbG</name>
    <name type="ordered locus">BSU33850</name>
</gene>